<sequence length="275" mass="31230">MSTIGSFEGFQAVSLKQEGDDQPSETDHLSMEEEDPMPRQISRQSSVTESTLYPNPYHQPYISRKYFATRPGAIETAMEDLKGHVAETSGETIQGFWLLTKIDHWNNEKERILLVTDKTLLICKYDFIMLSCVQLQRIPLSAVYRICLGKFTFPGMSLDKRQGEGLRIYWGSPEEQSLLSRWNPWSTEVPYATFTEHPMKYTSEKFLEICKLSGFMSKLVPAIQNAHKNSTGSGRGKKLMVLTEPILIETYTGLMSFIGNRNKLGYSLARGSIGF</sequence>
<evidence type="ECO:0000250" key="1">
    <source>
        <dbReference type="UniProtKB" id="Q8CB49"/>
    </source>
</evidence>
<evidence type="ECO:0000255" key="2">
    <source>
        <dbReference type="PROSITE-ProRule" id="PRU01127"/>
    </source>
</evidence>
<evidence type="ECO:0000256" key="3">
    <source>
        <dbReference type="SAM" id="MobiDB-lite"/>
    </source>
</evidence>
<evidence type="ECO:0000269" key="4">
    <source>
    </source>
</evidence>
<evidence type="ECO:0000305" key="5"/>
<protein>
    <recommendedName>
        <fullName>Tumor protein p63-regulated gene 1 protein</fullName>
    </recommendedName>
    <alternativeName>
        <fullName>Protein FAM79B</fullName>
    </alternativeName>
</protein>
<organism>
    <name type="scientific">Homo sapiens</name>
    <name type="common">Human</name>
    <dbReference type="NCBI Taxonomy" id="9606"/>
    <lineage>
        <taxon>Eukaryota</taxon>
        <taxon>Metazoa</taxon>
        <taxon>Chordata</taxon>
        <taxon>Craniata</taxon>
        <taxon>Vertebrata</taxon>
        <taxon>Euteleostomi</taxon>
        <taxon>Mammalia</taxon>
        <taxon>Eutheria</taxon>
        <taxon>Euarchontoglires</taxon>
        <taxon>Primates</taxon>
        <taxon>Haplorrhini</taxon>
        <taxon>Catarrhini</taxon>
        <taxon>Hominidae</taxon>
        <taxon>Homo</taxon>
    </lineage>
</organism>
<dbReference type="EMBL" id="AK123232">
    <property type="protein sequence ID" value="BAC85565.1"/>
    <property type="molecule type" value="mRNA"/>
</dbReference>
<dbReference type="EMBL" id="AK125682">
    <property type="protein sequence ID" value="BAC86245.1"/>
    <property type="molecule type" value="mRNA"/>
</dbReference>
<dbReference type="EMBL" id="BC101550">
    <property type="protein sequence ID" value="AAI01551.1"/>
    <property type="molecule type" value="mRNA"/>
</dbReference>
<dbReference type="EMBL" id="BC101552">
    <property type="protein sequence ID" value="AAI01553.1"/>
    <property type="molecule type" value="mRNA"/>
</dbReference>
<dbReference type="CCDS" id="CCDS3292.1"/>
<dbReference type="RefSeq" id="NP_940887.1">
    <property type="nucleotide sequence ID" value="NM_198485.4"/>
</dbReference>
<dbReference type="RefSeq" id="XP_016861750.1">
    <property type="nucleotide sequence ID" value="XM_017006261.1"/>
</dbReference>
<dbReference type="BioGRID" id="130099">
    <property type="interactions" value="29"/>
</dbReference>
<dbReference type="FunCoup" id="Q6ZUI0">
    <property type="interactions" value="552"/>
</dbReference>
<dbReference type="IntAct" id="Q6ZUI0">
    <property type="interactions" value="20"/>
</dbReference>
<dbReference type="STRING" id="9606.ENSP00000341031"/>
<dbReference type="GlyGen" id="Q6ZUI0">
    <property type="glycosylation" value="1 site, 1 O-linked glycan (1 site)"/>
</dbReference>
<dbReference type="iPTMnet" id="Q6ZUI0"/>
<dbReference type="PhosphoSitePlus" id="Q6ZUI0"/>
<dbReference type="BioMuta" id="TPRG1"/>
<dbReference type="DMDM" id="74711985"/>
<dbReference type="MassIVE" id="Q6ZUI0"/>
<dbReference type="PaxDb" id="9606-ENSP00000341031"/>
<dbReference type="PeptideAtlas" id="Q6ZUI0"/>
<dbReference type="ProteomicsDB" id="68332"/>
<dbReference type="Antibodypedia" id="46848">
    <property type="antibodies" value="39 antibodies from 11 providers"/>
</dbReference>
<dbReference type="DNASU" id="285386"/>
<dbReference type="Ensembl" id="ENST00000345063.8">
    <property type="protein sequence ID" value="ENSP00000341031.3"/>
    <property type="gene ID" value="ENSG00000188001.10"/>
</dbReference>
<dbReference type="Ensembl" id="ENST00000433971.5">
    <property type="protein sequence ID" value="ENSP00000412547.1"/>
    <property type="gene ID" value="ENSG00000188001.10"/>
</dbReference>
<dbReference type="GeneID" id="285386"/>
<dbReference type="KEGG" id="hsa:285386"/>
<dbReference type="MANE-Select" id="ENST00000345063.8">
    <property type="protein sequence ID" value="ENSP00000341031.3"/>
    <property type="RefSeq nucleotide sequence ID" value="NM_198485.4"/>
    <property type="RefSeq protein sequence ID" value="NP_940887.1"/>
</dbReference>
<dbReference type="UCSC" id="uc003frv.3">
    <property type="organism name" value="human"/>
</dbReference>
<dbReference type="AGR" id="HGNC:24759"/>
<dbReference type="CTD" id="285386"/>
<dbReference type="DisGeNET" id="285386"/>
<dbReference type="GeneCards" id="TPRG1"/>
<dbReference type="HGNC" id="HGNC:24759">
    <property type="gene designation" value="TPRG1"/>
</dbReference>
<dbReference type="HPA" id="ENSG00000188001">
    <property type="expression patterns" value="Tissue enhanced (esophagus, vagina)"/>
</dbReference>
<dbReference type="neXtProt" id="NX_Q6ZUI0"/>
<dbReference type="OpenTargets" id="ENSG00000188001"/>
<dbReference type="PharmGKB" id="PA162406838"/>
<dbReference type="VEuPathDB" id="HostDB:ENSG00000188001"/>
<dbReference type="eggNOG" id="ENOG502QSYP">
    <property type="taxonomic scope" value="Eukaryota"/>
</dbReference>
<dbReference type="GeneTree" id="ENSGT00390000001652"/>
<dbReference type="HOGENOM" id="CLU_066718_0_0_1"/>
<dbReference type="InParanoid" id="Q6ZUI0"/>
<dbReference type="OMA" id="IIQGFWL"/>
<dbReference type="OrthoDB" id="10012704at2759"/>
<dbReference type="PAN-GO" id="Q6ZUI0">
    <property type="GO annotations" value="1 GO annotation based on evolutionary models"/>
</dbReference>
<dbReference type="PhylomeDB" id="Q6ZUI0"/>
<dbReference type="TreeFam" id="TF333472"/>
<dbReference type="PathwayCommons" id="Q6ZUI0"/>
<dbReference type="SignaLink" id="Q6ZUI0"/>
<dbReference type="BioGRID-ORCS" id="285386">
    <property type="hits" value="6 hits in 1139 CRISPR screens"/>
</dbReference>
<dbReference type="ChiTaRS" id="TPRG1">
    <property type="organism name" value="human"/>
</dbReference>
<dbReference type="GenomeRNAi" id="285386"/>
<dbReference type="Pharos" id="Q6ZUI0">
    <property type="development level" value="Tdark"/>
</dbReference>
<dbReference type="PRO" id="PR:Q6ZUI0"/>
<dbReference type="Proteomes" id="UP000005640">
    <property type="component" value="Chromosome 3"/>
</dbReference>
<dbReference type="RNAct" id="Q6ZUI0">
    <property type="molecule type" value="protein"/>
</dbReference>
<dbReference type="Bgee" id="ENSG00000188001">
    <property type="expression patterns" value="Expressed in calcaneal tendon and 139 other cell types or tissues"/>
</dbReference>
<dbReference type="ExpressionAtlas" id="Q6ZUI0">
    <property type="expression patterns" value="baseline and differential"/>
</dbReference>
<dbReference type="GO" id="GO:0005737">
    <property type="term" value="C:cytoplasm"/>
    <property type="evidence" value="ECO:0000318"/>
    <property type="project" value="GO_Central"/>
</dbReference>
<dbReference type="InterPro" id="IPR034753">
    <property type="entry name" value="hSac2"/>
</dbReference>
<dbReference type="InterPro" id="IPR022158">
    <property type="entry name" value="Inositol_phosphatase"/>
</dbReference>
<dbReference type="InterPro" id="IPR040242">
    <property type="entry name" value="TPRG1-like"/>
</dbReference>
<dbReference type="PANTHER" id="PTHR31108:SF6">
    <property type="entry name" value="TUMOR PROTEIN P63-REGULATED GENE 1 PROTEIN"/>
    <property type="match status" value="1"/>
</dbReference>
<dbReference type="PANTHER" id="PTHR31108">
    <property type="entry name" value="TUMOR PROTEIN P63-REGULATED GENE 1-LIKE PROTEIN"/>
    <property type="match status" value="1"/>
</dbReference>
<dbReference type="Pfam" id="PF12456">
    <property type="entry name" value="hSac2"/>
    <property type="match status" value="1"/>
</dbReference>
<dbReference type="PROSITE" id="PS51791">
    <property type="entry name" value="HSAC2"/>
    <property type="match status" value="1"/>
</dbReference>
<feature type="chain" id="PRO_0000268825" description="Tumor protein p63-regulated gene 1 protein">
    <location>
        <begin position="1"/>
        <end position="275"/>
    </location>
</feature>
<feature type="domain" description="hSac2" evidence="2">
    <location>
        <begin position="68"/>
        <end position="240"/>
    </location>
</feature>
<feature type="region of interest" description="Disordered" evidence="3">
    <location>
        <begin position="1"/>
        <end position="54"/>
    </location>
</feature>
<feature type="compositionally biased region" description="Polar residues" evidence="3">
    <location>
        <begin position="41"/>
        <end position="53"/>
    </location>
</feature>
<proteinExistence type="evidence at protein level"/>
<keyword id="KW-0963">Cytoplasm</keyword>
<keyword id="KW-1267">Proteomics identification</keyword>
<keyword id="KW-1185">Reference proteome</keyword>
<gene>
    <name type="primary">TPRG1</name>
    <name type="synonym">FAM79B</name>
</gene>
<comment type="interaction">
    <interactant intactId="EBI-17249488">
        <id>Q6ZUI0</id>
    </interactant>
    <interactant intactId="EBI-1220105">
        <id>P02654</id>
        <label>APOC1</label>
    </interactant>
    <organismsDiffer>false</organismsDiffer>
    <experiments>3</experiments>
</comment>
<comment type="interaction">
    <interactant intactId="EBI-17249488">
        <id>Q6ZUI0</id>
    </interactant>
    <interactant intactId="EBI-18302142">
        <id>P55056</id>
        <label>APOC4</label>
    </interactant>
    <organismsDiffer>false</organismsDiffer>
    <experiments>3</experiments>
</comment>
<comment type="interaction">
    <interactant intactId="EBI-17249488">
        <id>Q6ZUI0</id>
    </interactant>
    <interactant intactId="EBI-13059134">
        <id>Q13520</id>
        <label>AQP6</label>
    </interactant>
    <organismsDiffer>false</organismsDiffer>
    <experiments>3</experiments>
</comment>
<comment type="interaction">
    <interactant intactId="EBI-17249488">
        <id>Q6ZUI0</id>
    </interactant>
    <interactant intactId="EBI-2130213">
        <id>Q99675</id>
        <label>CGRRF1</label>
    </interactant>
    <organismsDiffer>false</organismsDiffer>
    <experiments>3</experiments>
</comment>
<comment type="interaction">
    <interactant intactId="EBI-17249488">
        <id>Q6ZUI0</id>
    </interactant>
    <interactant intactId="EBI-7062247">
        <id>Q9UHD4</id>
        <label>CIDEB</label>
    </interactant>
    <organismsDiffer>false</organismsDiffer>
    <experiments>3</experiments>
</comment>
<comment type="interaction">
    <interactant intactId="EBI-17249488">
        <id>Q6ZUI0</id>
    </interactant>
    <interactant intactId="EBI-8787095">
        <id>O00559</id>
        <label>EBAG9</label>
    </interactant>
    <organismsDiffer>false</organismsDiffer>
    <experiments>3</experiments>
</comment>
<comment type="interaction">
    <interactant intactId="EBI-17249488">
        <id>Q6ZUI0</id>
    </interactant>
    <interactant intactId="EBI-1052304">
        <id>Q8NBQ5</id>
        <label>HSD17B11</label>
    </interactant>
    <organismsDiffer>false</organismsDiffer>
    <experiments>3</experiments>
</comment>
<comment type="interaction">
    <interactant intactId="EBI-17249488">
        <id>Q6ZUI0</id>
    </interactant>
    <interactant intactId="EBI-18053395">
        <id>Q7Z5P4</id>
        <label>HSD17B13</label>
    </interactant>
    <organismsDiffer>false</organismsDiffer>
    <experiments>3</experiments>
</comment>
<comment type="interaction">
    <interactant intactId="EBI-17249488">
        <id>Q6ZUI0</id>
    </interactant>
    <interactant intactId="EBI-373355">
        <id>Q5SR56</id>
        <label>MFSD14B</label>
    </interactant>
    <organismsDiffer>false</organismsDiffer>
    <experiments>3</experiments>
</comment>
<comment type="interaction">
    <interactant intactId="EBI-17249488">
        <id>Q6ZUI0</id>
    </interactant>
    <interactant intactId="EBI-7545592">
        <id>Q9H6H4</id>
        <label>REEP4</label>
    </interactant>
    <organismsDiffer>false</organismsDiffer>
    <experiments>3</experiments>
</comment>
<comment type="interaction">
    <interactant intactId="EBI-17249488">
        <id>Q6ZUI0</id>
    </interactant>
    <interactant intactId="EBI-10192441">
        <id>Q86VR2</id>
        <label>RETREG3</label>
    </interactant>
    <organismsDiffer>false</organismsDiffer>
    <experiments>3</experiments>
</comment>
<comment type="interaction">
    <interactant intactId="EBI-17249488">
        <id>Q6ZUI0</id>
    </interactant>
    <interactant intactId="EBI-17589229">
        <id>Q6NTF9-3</id>
        <label>RHBDD2</label>
    </interactant>
    <organismsDiffer>false</organismsDiffer>
    <experiments>3</experiments>
</comment>
<comment type="interaction">
    <interactant intactId="EBI-17249488">
        <id>Q6ZUI0</id>
    </interactant>
    <interactant intactId="EBI-17247926">
        <id>Q9NY72</id>
        <label>SCN3B</label>
    </interactant>
    <organismsDiffer>false</organismsDiffer>
    <experiments>3</experiments>
</comment>
<comment type="interaction">
    <interactant intactId="EBI-17249488">
        <id>Q6ZUI0</id>
    </interactant>
    <interactant intactId="EBI-18159983">
        <id>Q3KNW5</id>
        <label>SLC10A6</label>
    </interactant>
    <organismsDiffer>false</organismsDiffer>
    <experiments>3</experiments>
</comment>
<comment type="interaction">
    <interactant intactId="EBI-17249488">
        <id>Q6ZUI0</id>
    </interactant>
    <interactant intactId="EBI-17295964">
        <id>Q9NQQ7-3</id>
        <label>SLC35C2</label>
    </interactant>
    <organismsDiffer>false</organismsDiffer>
    <experiments>3</experiments>
</comment>
<comment type="interaction">
    <interactant intactId="EBI-17249488">
        <id>Q6ZUI0</id>
    </interactant>
    <interactant intactId="EBI-727322">
        <id>Q9BXJ8</id>
        <label>TMEM120A</label>
    </interactant>
    <organismsDiffer>false</organismsDiffer>
    <experiments>3</experiments>
</comment>
<comment type="interaction">
    <interactant intactId="EBI-17249488">
        <id>Q6ZUI0</id>
    </interactant>
    <interactant intactId="EBI-6447886">
        <id>Q9Y320</id>
        <label>TMX2</label>
    </interactant>
    <organismsDiffer>false</organismsDiffer>
    <experiments>3</experiments>
</comment>
<comment type="subcellular location">
    <subcellularLocation>
        <location evidence="1">Cytoplasm</location>
    </subcellularLocation>
</comment>
<comment type="tissue specificity">
    <text evidence="4">Expressed in the epidermal layer of the skin.</text>
</comment>
<comment type="similarity">
    <text evidence="5">Belongs to the TPRG1 family.</text>
</comment>
<name>TPRG1_HUMAN</name>
<accession>Q6ZUI0</accession>
<reference key="1">
    <citation type="journal article" date="2004" name="Nat. Genet.">
        <title>Complete sequencing and characterization of 21,243 full-length human cDNAs.</title>
        <authorList>
            <person name="Ota T."/>
            <person name="Suzuki Y."/>
            <person name="Nishikawa T."/>
            <person name="Otsuki T."/>
            <person name="Sugiyama T."/>
            <person name="Irie R."/>
            <person name="Wakamatsu A."/>
            <person name="Hayashi K."/>
            <person name="Sato H."/>
            <person name="Nagai K."/>
            <person name="Kimura K."/>
            <person name="Makita H."/>
            <person name="Sekine M."/>
            <person name="Obayashi M."/>
            <person name="Nishi T."/>
            <person name="Shibahara T."/>
            <person name="Tanaka T."/>
            <person name="Ishii S."/>
            <person name="Yamamoto J."/>
            <person name="Saito K."/>
            <person name="Kawai Y."/>
            <person name="Isono Y."/>
            <person name="Nakamura Y."/>
            <person name="Nagahari K."/>
            <person name="Murakami K."/>
            <person name="Yasuda T."/>
            <person name="Iwayanagi T."/>
            <person name="Wagatsuma M."/>
            <person name="Shiratori A."/>
            <person name="Sudo H."/>
            <person name="Hosoiri T."/>
            <person name="Kaku Y."/>
            <person name="Kodaira H."/>
            <person name="Kondo H."/>
            <person name="Sugawara M."/>
            <person name="Takahashi M."/>
            <person name="Kanda K."/>
            <person name="Yokoi T."/>
            <person name="Furuya T."/>
            <person name="Kikkawa E."/>
            <person name="Omura Y."/>
            <person name="Abe K."/>
            <person name="Kamihara K."/>
            <person name="Katsuta N."/>
            <person name="Sato K."/>
            <person name="Tanikawa M."/>
            <person name="Yamazaki M."/>
            <person name="Ninomiya K."/>
            <person name="Ishibashi T."/>
            <person name="Yamashita H."/>
            <person name="Murakawa K."/>
            <person name="Fujimori K."/>
            <person name="Tanai H."/>
            <person name="Kimata M."/>
            <person name="Watanabe M."/>
            <person name="Hiraoka S."/>
            <person name="Chiba Y."/>
            <person name="Ishida S."/>
            <person name="Ono Y."/>
            <person name="Takiguchi S."/>
            <person name="Watanabe S."/>
            <person name="Yosida M."/>
            <person name="Hotuta T."/>
            <person name="Kusano J."/>
            <person name="Kanehori K."/>
            <person name="Takahashi-Fujii A."/>
            <person name="Hara H."/>
            <person name="Tanase T.-O."/>
            <person name="Nomura Y."/>
            <person name="Togiya S."/>
            <person name="Komai F."/>
            <person name="Hara R."/>
            <person name="Takeuchi K."/>
            <person name="Arita M."/>
            <person name="Imose N."/>
            <person name="Musashino K."/>
            <person name="Yuuki H."/>
            <person name="Oshima A."/>
            <person name="Sasaki N."/>
            <person name="Aotsuka S."/>
            <person name="Yoshikawa Y."/>
            <person name="Matsunawa H."/>
            <person name="Ichihara T."/>
            <person name="Shiohata N."/>
            <person name="Sano S."/>
            <person name="Moriya S."/>
            <person name="Momiyama H."/>
            <person name="Satoh N."/>
            <person name="Takami S."/>
            <person name="Terashima Y."/>
            <person name="Suzuki O."/>
            <person name="Nakagawa S."/>
            <person name="Senoh A."/>
            <person name="Mizoguchi H."/>
            <person name="Goto Y."/>
            <person name="Shimizu F."/>
            <person name="Wakebe H."/>
            <person name="Hishigaki H."/>
            <person name="Watanabe T."/>
            <person name="Sugiyama A."/>
            <person name="Takemoto M."/>
            <person name="Kawakami B."/>
            <person name="Yamazaki M."/>
            <person name="Watanabe K."/>
            <person name="Kumagai A."/>
            <person name="Itakura S."/>
            <person name="Fukuzumi Y."/>
            <person name="Fujimori Y."/>
            <person name="Komiyama M."/>
            <person name="Tashiro H."/>
            <person name="Tanigami A."/>
            <person name="Fujiwara T."/>
            <person name="Ono T."/>
            <person name="Yamada K."/>
            <person name="Fujii Y."/>
            <person name="Ozaki K."/>
            <person name="Hirao M."/>
            <person name="Ohmori Y."/>
            <person name="Kawabata A."/>
            <person name="Hikiji T."/>
            <person name="Kobatake N."/>
            <person name="Inagaki H."/>
            <person name="Ikema Y."/>
            <person name="Okamoto S."/>
            <person name="Okitani R."/>
            <person name="Kawakami T."/>
            <person name="Noguchi S."/>
            <person name="Itoh T."/>
            <person name="Shigeta K."/>
            <person name="Senba T."/>
            <person name="Matsumura K."/>
            <person name="Nakajima Y."/>
            <person name="Mizuno T."/>
            <person name="Morinaga M."/>
            <person name="Sasaki M."/>
            <person name="Togashi T."/>
            <person name="Oyama M."/>
            <person name="Hata H."/>
            <person name="Watanabe M."/>
            <person name="Komatsu T."/>
            <person name="Mizushima-Sugano J."/>
            <person name="Satoh T."/>
            <person name="Shirai Y."/>
            <person name="Takahashi Y."/>
            <person name="Nakagawa K."/>
            <person name="Okumura K."/>
            <person name="Nagase T."/>
            <person name="Nomura N."/>
            <person name="Kikuchi H."/>
            <person name="Masuho Y."/>
            <person name="Yamashita R."/>
            <person name="Nakai K."/>
            <person name="Yada T."/>
            <person name="Nakamura Y."/>
            <person name="Ohara O."/>
            <person name="Isogai T."/>
            <person name="Sugano S."/>
        </authorList>
    </citation>
    <scope>NUCLEOTIDE SEQUENCE [LARGE SCALE MRNA]</scope>
    <source>
        <tissue>Mammary gland</tissue>
    </source>
</reference>
<reference key="2">
    <citation type="journal article" date="2004" name="Genome Res.">
        <title>The status, quality, and expansion of the NIH full-length cDNA project: the Mammalian Gene Collection (MGC).</title>
        <authorList>
            <consortium name="The MGC Project Team"/>
        </authorList>
    </citation>
    <scope>NUCLEOTIDE SEQUENCE [LARGE SCALE MRNA]</scope>
    <source>
        <tissue>Brain</tissue>
    </source>
</reference>
<reference key="3">
    <citation type="journal article" date="2008" name="J. Invest. Dermatol.">
        <title>Tprg, a gene predominantly expressed in skin, is a direct target of the transcription factor p63.</title>
        <authorList>
            <person name="Antonini D."/>
            <person name="Dentice M."/>
            <person name="Mahtani P."/>
            <person name="De Rosa L."/>
            <person name="Della Gatta G."/>
            <person name="Mandinova A."/>
            <person name="Salvatore D."/>
            <person name="Stupka E."/>
            <person name="Missero C."/>
        </authorList>
    </citation>
    <scope>TISSUE SPECIFICITY</scope>
</reference>